<comment type="function">
    <text evidence="1 5 6 7 9 13 15 16 21 22 23">Transcription regulator involved in inner cell mass and embryonic stem (ES) cells proliferation and self-renewal (PubMed:25825768). Imposes pluripotency on ES cells and prevents their differentiation towards extraembryonic endoderm and trophectoderm lineages. Blocks bone morphogenetic protein-induced mesoderm differentiation of ES cells by physically interacting with SMAD1 and interfering with the recruitment of coactivators to the active SMAD transcriptional complexes. Acts as a transcriptional activator or repressor. Binds optimally to the DNA consensus sequence 5'-TAAT[GT][GT]-3' or 5'-[CG][GA][CG]C[GC]ATTAN[GC]-3'. Binds to the POU5F1/OCT4 promoter (By similarity). Able to autorepress its expression in differentiating (ES) cells: binds to its own promoter following interaction with ZNF281/ZFP281, leading to recruitment of the NuRD complex and subsequent repression of expression. When overexpressed, promotes cells to enter into S phase and proliferation.</text>
</comment>
<comment type="subunit">
    <text evidence="1 16 17 19 20 21 22">Interacts with SMAD1 (PubMed:16801560). Interacts with SALL4 (PubMed:16840789). Interacts with ZNF281/ZFP281 (PubMed:21915945, PubMed:22988117). Interacts with PCGF1 (By similarity). Interacts with ESRRB; reciprocally modulates their transcriptional activities (PubMed:18957414). Interacts with NSD2 (PubMed:19483677).</text>
</comment>
<comment type="interaction">
    <interactant intactId="EBI-2312517">
        <id>Q80Z64</id>
    </interactant>
    <interactant intactId="EBI-2312665">
        <id>Q61066</id>
        <label>Nr0b1</label>
    </interactant>
    <organismsDiffer>false</organismsDiffer>
    <experiments>7</experiments>
</comment>
<comment type="interaction">
    <interactant intactId="EBI-2312517">
        <id>Q80Z64</id>
    </interactant>
    <interactant intactId="EBI-2432975">
        <id>Q9QUR7</id>
        <label>Pin1</label>
    </interactant>
    <organismsDiffer>false</organismsDiffer>
    <experiments>2</experiments>
</comment>
<comment type="interaction">
    <interactant intactId="EBI-2312517">
        <id>Q80Z64</id>
    </interactant>
    <interactant intactId="EBI-1606219">
        <id>P20263</id>
        <label>Pou5f1</label>
    </interactant>
    <organismsDiffer>false</organismsDiffer>
    <experiments>4</experiments>
</comment>
<comment type="interaction">
    <interactant intactId="EBI-2312517">
        <id>Q80Z64</id>
    </interactant>
    <interactant intactId="EBI-2312621">
        <id>Q6PR54</id>
        <label>Rif1</label>
    </interactant>
    <organismsDiffer>false</organismsDiffer>
    <experiments>5</experiments>
</comment>
<comment type="interaction">
    <interactant intactId="EBI-2312517">
        <id>Q80Z64</id>
    </interactant>
    <interactant intactId="EBI-2312694">
        <id>P70414</id>
        <label>Slc8a1</label>
    </interactant>
    <organismsDiffer>false</organismsDiffer>
    <experiments>9</experiments>
</comment>
<comment type="interaction">
    <interactant intactId="EBI-2312517">
        <id>Q80Z64</id>
    </interactant>
    <interactant intactId="EBI-2313612">
        <id>P48432</id>
        <label>Sox2</label>
    </interactant>
    <organismsDiffer>false</organismsDiffer>
    <experiments>10</experiments>
</comment>
<comment type="interaction">
    <interactant intactId="EBI-2312517">
        <id>Q80Z64</id>
    </interactant>
    <interactant intactId="EBI-2312719">
        <id>Q99LI5</id>
        <label>Znf281</label>
    </interactant>
    <organismsDiffer>false</organismsDiffer>
    <experiments>5</experiments>
</comment>
<comment type="interaction">
    <interactant intactId="EBI-15699014">
        <id>Q80Z64-1</id>
    </interactant>
    <interactant intactId="EBI-15699014">
        <id>Q80Z64-1</id>
        <label>Nanog</label>
    </interactant>
    <organismsDiffer>false</organismsDiffer>
    <experiments>2</experiments>
</comment>
<comment type="interaction">
    <interactant intactId="EBI-15699014">
        <id>Q80Z64-1</id>
    </interactant>
    <interactant intactId="EBI-413074">
        <id>P62991</id>
        <label>Ubc</label>
    </interactant>
    <organismsDiffer>false</organismsDiffer>
    <experiments>3</experiments>
</comment>
<comment type="interaction">
    <interactant intactId="EBI-15699014">
        <id>Q80Z64-1</id>
    </interactant>
    <interactant intactId="EBI-714158">
        <id>Q13526</id>
        <label>PIN1</label>
    </interactant>
    <organismsDiffer>true</organismsDiffer>
    <experiments>2</experiments>
</comment>
<comment type="subcellular location">
    <subcellularLocation>
        <location evidence="2 10">Nucleus</location>
    </subcellularLocation>
</comment>
<comment type="alternative products">
    <event type="alternative splicing"/>
    <isoform>
        <id>Q80Z64-1</id>
        <name>1</name>
        <sequence type="displayed"/>
    </isoform>
    <isoform>
        <id>Q80Z64-2</id>
        <name>2</name>
        <name>Nanog1a</name>
        <name>Nanog1b</name>
        <sequence type="described" ref="VSP_021689"/>
    </isoform>
</comment>
<comment type="tissue specificity">
    <text evidence="5 6 8 12">Not expressed in oocytes and spermatogonia (at protein level). Not expressed in many somatic organs, ovary, testis, fibroblast and hematopoietic cell lines.</text>
</comment>
<comment type="developmental stage">
    <text evidence="4 5 6 8 10 12">Expressed in the central portion of the morula, the inner cell mass (ICM) of the blastocyst, in embryonic stem (ES) and embryonic germ (EG) cells, in the epiblast between 6.5 and 7.5 dpc, in primordial germ cells (PGCs) between 7.75 and 12.5 dpc (at protein level). The expression in PGCs decreases in female germ cells that entered meiosis at 13.5 dpc and in male germ cells that entered mitotic arrest at 14.5 dpc (at protein level). Not expressed in unfertilized eggs or 2- or 8-cell-stage embryos (at protein level). Expressed in the central portion of the morula, the inner cell mass (ICM) of the blastocyst, in ES and EG cells, in the epiblast at 6 dpc and in PGCs of genital ridges between 11.5 and 12.5 dpc. Expression decreases with ES differentiation.</text>
</comment>
<comment type="induction">
    <text evidence="11 13 14 16 22">By the transcription factor POU5F1 in ES cells that acts as a direct biphasic regulator: a steady-state concentration of POU5F1 up-regulated its expression, while an elevated concentration of POU5F1 down-regulated its expression. Up-regulated by the transcription factor FOXD3. Up-regulated in ES cells by transcription factors T (Brachyury) and STAT3. Down-regulated by p53 in response to DNA damage induced by ultraviolet light (UV) or doxorubicin. Down-regulated upon ES differentiation by mediating autorepression through interaction with ZNF281/ZFP281.</text>
</comment>
<comment type="disruption phenotype">
    <text evidence="5">Loss of pluripotency in both ICM and ES cells and differentiated into extraembryonic (parietal and visceral) endoderm lineage.</text>
</comment>
<comment type="miscellaneous">
    <text>'Nanog' is derived from 'Tir nan Og' the mythologic Celtic land of the ever young.</text>
</comment>
<comment type="similarity">
    <text evidence="25">Belongs to the Nanog homeobox family.</text>
</comment>
<accession>Q80Z64</accession>
<accession>Q6SMR1</accession>
<accession>Q7TN85</accession>
<proteinExistence type="evidence at protein level"/>
<gene>
    <name type="primary">Nanog</name>
    <name type="synonym">Ecat4</name>
    <name type="synonym">Enk</name>
</gene>
<feature type="chain" id="PRO_0000261419" description="Homeobox protein NANOG">
    <location>
        <begin position="1"/>
        <end position="305"/>
    </location>
</feature>
<feature type="repeat" description="1">
    <location>
        <begin position="198"/>
        <end position="202"/>
    </location>
</feature>
<feature type="repeat" description="2">
    <location>
        <begin position="203"/>
        <end position="207"/>
    </location>
</feature>
<feature type="repeat" description="3">
    <location>
        <begin position="208"/>
        <end position="212"/>
    </location>
</feature>
<feature type="repeat" description="4">
    <location>
        <begin position="213"/>
        <end position="217"/>
    </location>
</feature>
<feature type="repeat" description="5">
    <location>
        <begin position="218"/>
        <end position="222"/>
    </location>
</feature>
<feature type="repeat" description="6">
    <location>
        <begin position="223"/>
        <end position="227"/>
    </location>
</feature>
<feature type="repeat" description="7">
    <location>
        <begin position="228"/>
        <end position="232"/>
    </location>
</feature>
<feature type="repeat" description="8">
    <location>
        <begin position="233"/>
        <end position="237"/>
    </location>
</feature>
<feature type="repeat" description="9">
    <location>
        <begin position="238"/>
        <end position="242"/>
    </location>
</feature>
<feature type="repeat" description="10">
    <location>
        <begin position="243"/>
        <end position="247"/>
    </location>
</feature>
<feature type="DNA-binding region" description="Homeobox" evidence="2">
    <location>
        <begin position="96"/>
        <end position="155"/>
    </location>
</feature>
<feature type="region of interest" description="Disordered" evidence="3">
    <location>
        <begin position="1"/>
        <end position="30"/>
    </location>
</feature>
<feature type="region of interest" description="Disordered" evidence="3">
    <location>
        <begin position="46"/>
        <end position="95"/>
    </location>
</feature>
<feature type="region of interest" description="Sufficient for interaction with SALL4" evidence="17">
    <location>
        <begin position="96"/>
        <end position="155"/>
    </location>
</feature>
<feature type="region of interest" description="Required for DNA-binding" evidence="1">
    <location>
        <begin position="123"/>
        <end position="152"/>
    </location>
</feature>
<feature type="region of interest" description="10 X repeats starting with a Trp in each unit">
    <location>
        <begin position="198"/>
        <end position="247"/>
    </location>
</feature>
<feature type="region of interest" description="Sufficient for transactivation activity">
    <location>
        <begin position="198"/>
        <end position="247"/>
    </location>
</feature>
<feature type="region of interest" description="Sufficient for strong transactivation activity">
    <location>
        <begin position="248"/>
        <end position="305"/>
    </location>
</feature>
<feature type="compositionally biased region" description="Low complexity" evidence="3">
    <location>
        <begin position="13"/>
        <end position="25"/>
    </location>
</feature>
<feature type="compositionally biased region" description="Polar residues" evidence="3">
    <location>
        <begin position="65"/>
        <end position="77"/>
    </location>
</feature>
<feature type="splice variant" id="VSP_021689" description="In isoform 2." evidence="24">
    <location>
        <begin position="1"/>
        <end position="25"/>
    </location>
</feature>
<feature type="mutagenesis site" description="Decreased protein expression. Decreased embryonic stem cell self-renewal." evidence="23">
    <original>T</original>
    <variation>A</variation>
    <location>
        <position position="101"/>
    </location>
</feature>
<feature type="mutagenesis site" description="Decreased protein expression and stability. Decreased embryonic stem cell self-renewal." evidence="23">
    <original>F</original>
    <variation>A</variation>
    <location>
        <position position="103"/>
    </location>
</feature>
<feature type="mutagenesis site" description="Increases affinity for DNA and protein stability; when associated with R-147." evidence="18">
    <original>K</original>
    <variation>E</variation>
    <location>
        <position position="112"/>
    </location>
</feature>
<feature type="mutagenesis site" description="Decreased protein expression and stability. Decreased embryonic stem cell self-renewal." evidence="23">
    <original>Y</original>
    <variation>A</variation>
    <location>
        <position position="120"/>
    </location>
</feature>
<feature type="mutagenesis site" description="Increased protein expression and stability." evidence="23">
    <original>L</original>
    <variation>A</variation>
    <location>
        <position position="123"/>
    </location>
</feature>
<feature type="mutagenesis site" description="Decreased protein expression. No effect on protein stability." evidence="23">
    <original>Q</original>
    <variation>A</variation>
    <location>
        <position position="125"/>
    </location>
</feature>
<feature type="mutagenesis site" description="No effect on protein stability." evidence="23">
    <original>M</original>
    <variation>A</variation>
    <location>
        <position position="126"/>
    </location>
</feature>
<feature type="mutagenesis site" description="Increases affinity for DNA; when associated with E-137." evidence="18">
    <original>M</original>
    <variation>R</variation>
    <location>
        <position position="126"/>
    </location>
</feature>
<feature type="mutagenesis site" description="Increased protein expression. Decreased protein stability." evidence="23">
    <original>Y</original>
    <variation>A</variation>
    <location>
        <position position="137"/>
    </location>
</feature>
<feature type="mutagenesis site" description="Increases affinity for DNA; when associated with R-126." evidence="18">
    <original>Y</original>
    <variation>E</variation>
    <location>
        <position position="137"/>
    </location>
</feature>
<feature type="mutagenesis site" description="Decreased protein expression and stability. Decreased embryonic stem cell self-renewal." evidence="23">
    <original>K</original>
    <variation>A</variation>
    <location>
        <position position="138"/>
    </location>
</feature>
<feature type="mutagenesis site" description="Reduced affinity for DNA." evidence="18">
    <original>K</original>
    <variation>E</variation>
    <location>
        <position position="138"/>
    </location>
</feature>
<feature type="mutagenesis site" description="Decreased protein stability." evidence="23">
    <original>K</original>
    <variation>A</variation>
    <location>
        <position position="141"/>
    </location>
</feature>
<feature type="mutagenesis site" description="Decreased protein expression and stability. Decreased embryonic stem cell self-renewal." evidence="23">
    <original>T</original>
    <variation>A</variation>
    <location>
        <position position="142"/>
    </location>
</feature>
<feature type="mutagenesis site" description="Slightly reduced affinity for DNA." evidence="18">
    <original>T</original>
    <variation>I</variation>
    <location>
        <position position="142"/>
    </location>
</feature>
<feature type="mutagenesis site" description="Increased protein expression. No effect on protein stability." evidence="23">
    <original>Q</original>
    <variation>A</variation>
    <location>
        <position position="145"/>
    </location>
</feature>
<feature type="mutagenesis site" description="No effect on protein stability. Decreased embryonic stem cell self-renewal." evidence="23">
    <original>N</original>
    <variation>A</variation>
    <location>
        <position position="146"/>
    </location>
</feature>
<feature type="mutagenesis site" description="Strongly reduced affinity for DNA." evidence="18">
    <original>N</original>
    <variation>E</variation>
    <location>
        <position position="146"/>
    </location>
</feature>
<feature type="mutagenesis site" description="Increases affinity for DNA and protein stability; when associated with E-112." evidence="18">
    <original>Q</original>
    <variation>R</variation>
    <location>
        <position position="147"/>
    </location>
</feature>
<feature type="mutagenesis site" description="Decreased protein stability. Decreased embryonic stem cell self-renewal." evidence="23">
    <original>R</original>
    <variation>A</variation>
    <location>
        <position position="148"/>
    </location>
</feature>
<feature type="mutagenesis site" description="Increased protein expression. No effect on protein stability." evidence="23">
    <original>M</original>
    <variation>A</variation>
    <location>
        <position position="149"/>
    </location>
</feature>
<feature type="mutagenesis site" description="Decreased protein expression and stability." evidence="23">
    <original>K</original>
    <variation>A</variation>
    <location>
        <position position="152"/>
    </location>
</feature>
<feature type="sequence conflict" description="In Ref. 1; BAC76998." evidence="25" ref="1">
    <original>M</original>
    <variation>V</variation>
    <location>
        <position position="149"/>
    </location>
</feature>
<feature type="helix" evidence="26">
    <location>
        <begin position="105"/>
        <end position="117"/>
    </location>
</feature>
<feature type="helix" evidence="26">
    <location>
        <begin position="123"/>
        <end position="133"/>
    </location>
</feature>
<feature type="helix" evidence="26">
    <location>
        <begin position="137"/>
        <end position="149"/>
    </location>
</feature>
<feature type="helix" evidence="26">
    <location>
        <begin position="152"/>
        <end position="154"/>
    </location>
</feature>
<dbReference type="EMBL" id="AB093574">
    <property type="protein sequence ID" value="BAC76998.1"/>
    <property type="molecule type" value="mRNA"/>
</dbReference>
<dbReference type="EMBL" id="AY278951">
    <property type="protein sequence ID" value="AAP92157.1"/>
    <property type="molecule type" value="mRNA"/>
</dbReference>
<dbReference type="EMBL" id="AF507043">
    <property type="protein sequence ID" value="AAO67362.1"/>
    <property type="molecule type" value="mRNA"/>
</dbReference>
<dbReference type="EMBL" id="AY455282">
    <property type="protein sequence ID" value="AAS57554.1"/>
    <property type="molecule type" value="mRNA"/>
</dbReference>
<dbReference type="EMBL" id="AY455285">
    <property type="protein sequence ID" value="AAS57556.1"/>
    <property type="molecule type" value="mRNA"/>
</dbReference>
<dbReference type="EMBL" id="AK010332">
    <property type="protein sequence ID" value="BAE43219.1"/>
    <property type="molecule type" value="mRNA"/>
</dbReference>
<dbReference type="CCDS" id="CCDS39623.1">
    <molecule id="Q80Z64-1"/>
</dbReference>
<dbReference type="CCDS" id="CCDS80607.1">
    <molecule id="Q80Z64-2"/>
</dbReference>
<dbReference type="RefSeq" id="NP_001276757.1">
    <property type="nucleotide sequence ID" value="NM_001289828.1"/>
</dbReference>
<dbReference type="RefSeq" id="NP_001276759.1">
    <molecule id="Q80Z64-2"/>
    <property type="nucleotide sequence ID" value="NM_001289830.1"/>
</dbReference>
<dbReference type="RefSeq" id="NP_001276760.1">
    <molecule id="Q80Z64-2"/>
    <property type="nucleotide sequence ID" value="NM_001289831.1"/>
</dbReference>
<dbReference type="RefSeq" id="NP_082292.1">
    <molecule id="Q80Z64-1"/>
    <property type="nucleotide sequence ID" value="NM_028016.3"/>
</dbReference>
<dbReference type="RefSeq" id="XP_006506714.1">
    <property type="nucleotide sequence ID" value="XM_006506651.2"/>
</dbReference>
<dbReference type="PDB" id="2VI6">
    <property type="method" value="X-ray"/>
    <property type="resolution" value="2.60 A"/>
    <property type="chains" value="A/B/C/D/E/F/G/H=96-155"/>
</dbReference>
<dbReference type="PDBsum" id="2VI6"/>
<dbReference type="SMR" id="Q80Z64"/>
<dbReference type="BioGRID" id="215050">
    <property type="interactions" value="289"/>
</dbReference>
<dbReference type="DIP" id="DIP-29932N"/>
<dbReference type="ELM" id="Q80Z64"/>
<dbReference type="FunCoup" id="Q80Z64">
    <property type="interactions" value="959"/>
</dbReference>
<dbReference type="IntAct" id="Q80Z64">
    <property type="interactions" value="154"/>
</dbReference>
<dbReference type="MINT" id="Q80Z64"/>
<dbReference type="STRING" id="10090.ENSMUSP00000012540"/>
<dbReference type="GlyGen" id="Q80Z64">
    <property type="glycosylation" value="4 sites, 1 O-linked glycan (3 sites)"/>
</dbReference>
<dbReference type="iPTMnet" id="Q80Z64"/>
<dbReference type="PhosphoSitePlus" id="Q80Z64"/>
<dbReference type="PaxDb" id="10090-ENSMUSP00000012540"/>
<dbReference type="Ensembl" id="ENSMUST00000012540.5">
    <molecule id="Q80Z64-1"/>
    <property type="protein sequence ID" value="ENSMUSP00000012540.4"/>
    <property type="gene ID" value="ENSMUSG00000012396.13"/>
</dbReference>
<dbReference type="Ensembl" id="ENSMUST00000112580.8">
    <molecule id="Q80Z64-2"/>
    <property type="protein sequence ID" value="ENSMUSP00000108199.2"/>
    <property type="gene ID" value="ENSMUSG00000012396.13"/>
</dbReference>
<dbReference type="Ensembl" id="ENSMUST00000112581.8">
    <molecule id="Q80Z64-2"/>
    <property type="protein sequence ID" value="ENSMUSP00000108200.2"/>
    <property type="gene ID" value="ENSMUSG00000012396.13"/>
</dbReference>
<dbReference type="GeneID" id="71950"/>
<dbReference type="KEGG" id="mmu:71950"/>
<dbReference type="UCSC" id="uc009dpo.2">
    <molecule id="Q80Z64-1"/>
    <property type="organism name" value="mouse"/>
</dbReference>
<dbReference type="AGR" id="MGI:1919200"/>
<dbReference type="CTD" id="79923"/>
<dbReference type="MGI" id="MGI:1919200">
    <property type="gene designation" value="Nanog"/>
</dbReference>
<dbReference type="VEuPathDB" id="HostDB:ENSMUSG00000012396"/>
<dbReference type="eggNOG" id="KOG0491">
    <property type="taxonomic scope" value="Eukaryota"/>
</dbReference>
<dbReference type="GeneTree" id="ENSGT00670000098076"/>
<dbReference type="HOGENOM" id="CLU_086240_0_0_1"/>
<dbReference type="InParanoid" id="Q80Z64"/>
<dbReference type="OMA" id="AWSNHSW"/>
<dbReference type="OrthoDB" id="6159439at2759"/>
<dbReference type="PhylomeDB" id="Q80Z64"/>
<dbReference type="TreeFam" id="TF337402"/>
<dbReference type="BioGRID-ORCS" id="71950">
    <property type="hits" value="5 hits in 80 CRISPR screens"/>
</dbReference>
<dbReference type="ChiTaRS" id="Nanog">
    <property type="organism name" value="mouse"/>
</dbReference>
<dbReference type="EvolutionaryTrace" id="Q80Z64"/>
<dbReference type="PRO" id="PR:Q80Z64"/>
<dbReference type="Proteomes" id="UP000000589">
    <property type="component" value="Chromosome 6"/>
</dbReference>
<dbReference type="RNAct" id="Q80Z64">
    <property type="molecule type" value="protein"/>
</dbReference>
<dbReference type="Bgee" id="ENSMUSG00000012396">
    <property type="expression patterns" value="Expressed in embryonic cell in blastocyst and 24 other cell types or tissues"/>
</dbReference>
<dbReference type="ExpressionAtlas" id="Q80Z64">
    <property type="expression patterns" value="baseline and differential"/>
</dbReference>
<dbReference type="GO" id="GO:0000785">
    <property type="term" value="C:chromatin"/>
    <property type="evidence" value="ECO:0000314"/>
    <property type="project" value="MGI"/>
</dbReference>
<dbReference type="GO" id="GO:0005654">
    <property type="term" value="C:nucleoplasm"/>
    <property type="evidence" value="ECO:0000314"/>
    <property type="project" value="BHF-UCL"/>
</dbReference>
<dbReference type="GO" id="GO:0005634">
    <property type="term" value="C:nucleus"/>
    <property type="evidence" value="ECO:0000314"/>
    <property type="project" value="BHF-UCL"/>
</dbReference>
<dbReference type="GO" id="GO:0003682">
    <property type="term" value="F:chromatin binding"/>
    <property type="evidence" value="ECO:0000314"/>
    <property type="project" value="MGI"/>
</dbReference>
<dbReference type="GO" id="GO:0003677">
    <property type="term" value="F:DNA binding"/>
    <property type="evidence" value="ECO:0000314"/>
    <property type="project" value="MGI"/>
</dbReference>
<dbReference type="GO" id="GO:0001228">
    <property type="term" value="F:DNA-binding transcription activator activity, RNA polymerase II-specific"/>
    <property type="evidence" value="ECO:0000314"/>
    <property type="project" value="UniProtKB"/>
</dbReference>
<dbReference type="GO" id="GO:0003700">
    <property type="term" value="F:DNA-binding transcription factor activity"/>
    <property type="evidence" value="ECO:0000315"/>
    <property type="project" value="UniProtKB"/>
</dbReference>
<dbReference type="GO" id="GO:0001227">
    <property type="term" value="F:DNA-binding transcription repressor activity, RNA polymerase II-specific"/>
    <property type="evidence" value="ECO:0000315"/>
    <property type="project" value="UniProtKB"/>
</dbReference>
<dbReference type="GO" id="GO:0042802">
    <property type="term" value="F:identical protein binding"/>
    <property type="evidence" value="ECO:0000353"/>
    <property type="project" value="IntAct"/>
</dbReference>
<dbReference type="GO" id="GO:0070577">
    <property type="term" value="F:lysine-acetylated histone binding"/>
    <property type="evidence" value="ECO:0000314"/>
    <property type="project" value="MGI"/>
</dbReference>
<dbReference type="GO" id="GO:0000978">
    <property type="term" value="F:RNA polymerase II cis-regulatory region sequence-specific DNA binding"/>
    <property type="evidence" value="ECO:0000314"/>
    <property type="project" value="BHF-UCL"/>
</dbReference>
<dbReference type="GO" id="GO:0001010">
    <property type="term" value="F:RNA polymerase II sequence-specific DNA-binding transcription factor recruiting activity"/>
    <property type="evidence" value="ECO:0000314"/>
    <property type="project" value="UniProtKB"/>
</dbReference>
<dbReference type="GO" id="GO:0043565">
    <property type="term" value="F:sequence-specific DNA binding"/>
    <property type="evidence" value="ECO:0000314"/>
    <property type="project" value="BHF-UCL"/>
</dbReference>
<dbReference type="GO" id="GO:0000976">
    <property type="term" value="F:transcription cis-regulatory region binding"/>
    <property type="evidence" value="ECO:0000314"/>
    <property type="project" value="MGI"/>
</dbReference>
<dbReference type="GO" id="GO:0008134">
    <property type="term" value="F:transcription factor binding"/>
    <property type="evidence" value="ECO:0000353"/>
    <property type="project" value="UniProtKB"/>
</dbReference>
<dbReference type="GO" id="GO:0030509">
    <property type="term" value="P:BMP signaling pathway"/>
    <property type="evidence" value="ECO:0000314"/>
    <property type="project" value="MGI"/>
</dbReference>
<dbReference type="GO" id="GO:0043697">
    <property type="term" value="P:cell dedifferentiation"/>
    <property type="evidence" value="ECO:0000314"/>
    <property type="project" value="UniProtKB"/>
</dbReference>
<dbReference type="GO" id="GO:0036018">
    <property type="term" value="P:cellular response to erythropoietin"/>
    <property type="evidence" value="ECO:0007669"/>
    <property type="project" value="Ensembl"/>
</dbReference>
<dbReference type="GO" id="GO:0072752">
    <property type="term" value="P:cellular response to rapamycin"/>
    <property type="evidence" value="ECO:0007669"/>
    <property type="project" value="Ensembl"/>
</dbReference>
<dbReference type="GO" id="GO:0009880">
    <property type="term" value="P:embryonic pattern specification"/>
    <property type="evidence" value="ECO:0000270"/>
    <property type="project" value="HGNC-UCL"/>
</dbReference>
<dbReference type="GO" id="GO:0001714">
    <property type="term" value="P:endodermal cell fate specification"/>
    <property type="evidence" value="ECO:0000266"/>
    <property type="project" value="MGI"/>
</dbReference>
<dbReference type="GO" id="GO:0010467">
    <property type="term" value="P:gene expression"/>
    <property type="evidence" value="ECO:0000315"/>
    <property type="project" value="MGI"/>
</dbReference>
<dbReference type="GO" id="GO:0008406">
    <property type="term" value="P:gonad development"/>
    <property type="evidence" value="ECO:0000270"/>
    <property type="project" value="HGNC-UCL"/>
</dbReference>
<dbReference type="GO" id="GO:0001710">
    <property type="term" value="P:mesodermal cell fate commitment"/>
    <property type="evidence" value="ECO:0000314"/>
    <property type="project" value="MGI"/>
</dbReference>
<dbReference type="GO" id="GO:0009825">
    <property type="term" value="P:multidimensional cell growth"/>
    <property type="evidence" value="ECO:0007669"/>
    <property type="project" value="Ensembl"/>
</dbReference>
<dbReference type="GO" id="GO:0030514">
    <property type="term" value="P:negative regulation of BMP signaling pathway"/>
    <property type="evidence" value="ECO:0000314"/>
    <property type="project" value="MGI"/>
</dbReference>
<dbReference type="GO" id="GO:0010454">
    <property type="term" value="P:negative regulation of cell fate commitment"/>
    <property type="evidence" value="ECO:0000314"/>
    <property type="project" value="MGI"/>
</dbReference>
<dbReference type="GO" id="GO:0042664">
    <property type="term" value="P:negative regulation of endodermal cell fate specification"/>
    <property type="evidence" value="ECO:0000304"/>
    <property type="project" value="HGNC-UCL"/>
</dbReference>
<dbReference type="GO" id="GO:2000737">
    <property type="term" value="P:negative regulation of stem cell differentiation"/>
    <property type="evidence" value="ECO:0000314"/>
    <property type="project" value="MGI"/>
</dbReference>
<dbReference type="GO" id="GO:0000122">
    <property type="term" value="P:negative regulation of transcription by RNA polymerase II"/>
    <property type="evidence" value="ECO:0000315"/>
    <property type="project" value="MGI"/>
</dbReference>
<dbReference type="GO" id="GO:0008284">
    <property type="term" value="P:positive regulation of cell population proliferation"/>
    <property type="evidence" value="ECO:0000314"/>
    <property type="project" value="MGI"/>
</dbReference>
<dbReference type="GO" id="GO:0045893">
    <property type="term" value="P:positive regulation of DNA-templated transcription"/>
    <property type="evidence" value="ECO:0000314"/>
    <property type="project" value="UniProtKB"/>
</dbReference>
<dbReference type="GO" id="GO:0045931">
    <property type="term" value="P:positive regulation of mitotic cell cycle"/>
    <property type="evidence" value="ECO:0000314"/>
    <property type="project" value="MGI"/>
</dbReference>
<dbReference type="GO" id="GO:0045944">
    <property type="term" value="P:positive regulation of transcription by RNA polymerase II"/>
    <property type="evidence" value="ECO:0000315"/>
    <property type="project" value="BHF-UCL"/>
</dbReference>
<dbReference type="GO" id="GO:2000035">
    <property type="term" value="P:regulation of stem cell division"/>
    <property type="evidence" value="ECO:0000314"/>
    <property type="project" value="UniProtKB"/>
</dbReference>
<dbReference type="GO" id="GO:0032526">
    <property type="term" value="P:response to retinoic acid"/>
    <property type="evidence" value="ECO:0000314"/>
    <property type="project" value="MGI"/>
</dbReference>
<dbReference type="GO" id="GO:0035019">
    <property type="term" value="P:somatic stem cell population maintenance"/>
    <property type="evidence" value="ECO:0000314"/>
    <property type="project" value="MGI"/>
</dbReference>
<dbReference type="GO" id="GO:0048863">
    <property type="term" value="P:stem cell differentiation"/>
    <property type="evidence" value="ECO:0000314"/>
    <property type="project" value="MGI"/>
</dbReference>
<dbReference type="GO" id="GO:0017145">
    <property type="term" value="P:stem cell division"/>
    <property type="evidence" value="ECO:0000314"/>
    <property type="project" value="MGI"/>
</dbReference>
<dbReference type="GO" id="GO:0019827">
    <property type="term" value="P:stem cell population maintenance"/>
    <property type="evidence" value="ECO:0000315"/>
    <property type="project" value="UniProtKB"/>
</dbReference>
<dbReference type="GO" id="GO:0042246">
    <property type="term" value="P:tissue regeneration"/>
    <property type="evidence" value="ECO:0007669"/>
    <property type="project" value="Ensembl"/>
</dbReference>
<dbReference type="CDD" id="cd00086">
    <property type="entry name" value="homeodomain"/>
    <property type="match status" value="1"/>
</dbReference>
<dbReference type="FunFam" id="1.10.10.60:FF:000203">
    <property type="entry name" value="Nanog homeobox transcription factor"/>
    <property type="match status" value="1"/>
</dbReference>
<dbReference type="Gene3D" id="1.10.10.60">
    <property type="entry name" value="Homeodomain-like"/>
    <property type="match status" value="1"/>
</dbReference>
<dbReference type="InterPro" id="IPR050460">
    <property type="entry name" value="Distal-less_Homeobox_TF"/>
</dbReference>
<dbReference type="InterPro" id="IPR001356">
    <property type="entry name" value="HD"/>
</dbReference>
<dbReference type="InterPro" id="IPR017970">
    <property type="entry name" value="Homeobox_CS"/>
</dbReference>
<dbReference type="InterPro" id="IPR009057">
    <property type="entry name" value="Homeodomain-like_sf"/>
</dbReference>
<dbReference type="PANTHER" id="PTHR24327">
    <property type="entry name" value="HOMEOBOX PROTEIN"/>
    <property type="match status" value="1"/>
</dbReference>
<dbReference type="PANTHER" id="PTHR24327:SF72">
    <property type="entry name" value="HOMEOBOX PROTEIN NANOG"/>
    <property type="match status" value="1"/>
</dbReference>
<dbReference type="Pfam" id="PF00046">
    <property type="entry name" value="Homeodomain"/>
    <property type="match status" value="1"/>
</dbReference>
<dbReference type="SMART" id="SM00389">
    <property type="entry name" value="HOX"/>
    <property type="match status" value="1"/>
</dbReference>
<dbReference type="SUPFAM" id="SSF46689">
    <property type="entry name" value="Homeodomain-like"/>
    <property type="match status" value="1"/>
</dbReference>
<dbReference type="PROSITE" id="PS00027">
    <property type="entry name" value="HOMEOBOX_1"/>
    <property type="match status" value="1"/>
</dbReference>
<dbReference type="PROSITE" id="PS50071">
    <property type="entry name" value="HOMEOBOX_2"/>
    <property type="match status" value="1"/>
</dbReference>
<sequence length="305" mass="34240">MSVGLPGPHSLPSSEEASNSGNASSMPAVFHPENYSCLQGSATEMLCTEAASPRPSSEDLPLQGSPDSSTSPKQKLSSPEADKGPEEEENKVLARKQKMRTVFSQAQLCALKDRFQKQKYLSLQQMQELSSILNLSYKQVKTWFQNQRMKCKRWQKNQWLKTSNGLIQKGSAPVEYPSIHCSYPQGYLVNASGSLSMWGSQTWTNPTWSSQTWTNPTWNNQTWTNPTWSSQAWTAQSWNGQPWNAAPLHNFGEDFLQPYVQLQQNFSASDLEVNLEATRESHAHFSTPQALELFLNYSVTPPGEI</sequence>
<name>NANOG_MOUSE</name>
<keyword id="KW-0002">3D-structure</keyword>
<keyword id="KW-0010">Activator</keyword>
<keyword id="KW-0025">Alternative splicing</keyword>
<keyword id="KW-0217">Developmental protein</keyword>
<keyword id="KW-0903">Direct protein sequencing</keyword>
<keyword id="KW-0238">DNA-binding</keyword>
<keyword id="KW-0371">Homeobox</keyword>
<keyword id="KW-0539">Nucleus</keyword>
<keyword id="KW-1185">Reference proteome</keyword>
<keyword id="KW-0677">Repeat</keyword>
<keyword id="KW-0678">Repressor</keyword>
<keyword id="KW-0804">Transcription</keyword>
<keyword id="KW-0805">Transcription regulation</keyword>
<protein>
    <recommendedName>
        <fullName>Homeobox protein NANOG</fullName>
    </recommendedName>
    <alternativeName>
        <fullName>ES cell-associated protein 4</fullName>
    </alternativeName>
    <alternativeName>
        <fullName>Early embryo specific expression NK-type homeobox protein</fullName>
    </alternativeName>
    <alternativeName>
        <fullName>Homeobox transcription factor Nanog</fullName>
    </alternativeName>
</protein>
<reference key="1">
    <citation type="journal article" date="2003" name="Cell">
        <title>The homeoprotein Nanog is required for maintenance of pluripotency in mouse epiblast and ES cells.</title>
        <authorList>
            <person name="Mitsui K."/>
            <person name="Tokuzawa Y."/>
            <person name="Itoh H."/>
            <person name="Segawa K."/>
            <person name="Murakami M."/>
            <person name="Takahashi K."/>
            <person name="Maruyama M."/>
            <person name="Maeda M."/>
            <person name="Yamanaka S."/>
        </authorList>
    </citation>
    <scope>NUCLEOTIDE SEQUENCE [MRNA] (ISOFORM 1)</scope>
    <scope>FUNCTION</scope>
    <scope>DNA-BINDING</scope>
    <scope>DEVELOPMENTAL STAGE</scope>
    <scope>TISSUE SPECIFICITY</scope>
    <scope>DISRUPTION PHENOTYPE</scope>
</reference>
<reference key="2">
    <citation type="journal article" date="2003" name="Cell">
        <title>Functional expression cloning of Nanog, a pluripotency sustaining factor in embryonic stem cells.</title>
        <authorList>
            <person name="Chambers I."/>
            <person name="Colby D."/>
            <person name="Robertson M."/>
            <person name="Nichols J."/>
            <person name="Lee S."/>
            <person name="Tweedie S."/>
            <person name="Smith A."/>
        </authorList>
    </citation>
    <scope>NUCLEOTIDE SEQUENCE [MRNA] (ISOFORM 1)</scope>
    <scope>FUNCTION</scope>
    <scope>DEVELOPMENTAL STAGE</scope>
    <scope>TISSUE SPECIFICITY</scope>
    <source>
        <strain>129/Ola</strain>
        <tissue>Embryonic stem cell</tissue>
    </source>
</reference>
<reference key="3">
    <citation type="journal article" date="2003" name="Gene Expr. Patterns">
        <title>A novel NK-type homeobox gene, ENK (early embryo specific NK), preferentially expressed in embryonic stem cells.</title>
        <authorList>
            <person name="Wang S.-H."/>
            <person name="Tsai M.-S."/>
            <person name="Chiang M.-F."/>
            <person name="Li H."/>
        </authorList>
    </citation>
    <scope>NUCLEOTIDE SEQUENCE [MRNA] (ISOFORM 1)</scope>
    <scope>DEVELOPMENTAL STAGE</scope>
    <source>
        <strain>FVB/NJ</strain>
        <tissue>Embryonic stem cell</tissue>
    </source>
</reference>
<reference key="4">
    <citation type="journal article" date="2004" name="Dev. Dyn.">
        <title>Identification, cloning and expression analysis of the pluripotency promoting Nanog genes in mouse and human.</title>
        <authorList>
            <person name="Hart A.H."/>
            <person name="Hartley L."/>
            <person name="Ibrahim M."/>
            <person name="Robb L."/>
        </authorList>
    </citation>
    <scope>NUCLEOTIDE SEQUENCE [MRNA] (ISOFORMS 1 AND 2)</scope>
    <scope>DEVELOPMENTAL STAGE</scope>
    <scope>TISSUE SPECIFICITY</scope>
    <source>
        <strain>C57BL/6J</strain>
    </source>
</reference>
<reference key="5">
    <citation type="journal article" date="2005" name="Science">
        <title>The transcriptional landscape of the mammalian genome.</title>
        <authorList>
            <person name="Carninci P."/>
            <person name="Kasukawa T."/>
            <person name="Katayama S."/>
            <person name="Gough J."/>
            <person name="Frith M.C."/>
            <person name="Maeda N."/>
            <person name="Oyama R."/>
            <person name="Ravasi T."/>
            <person name="Lenhard B."/>
            <person name="Wells C."/>
            <person name="Kodzius R."/>
            <person name="Shimokawa K."/>
            <person name="Bajic V.B."/>
            <person name="Brenner S.E."/>
            <person name="Batalov S."/>
            <person name="Forrest A.R."/>
            <person name="Zavolan M."/>
            <person name="Davis M.J."/>
            <person name="Wilming L.G."/>
            <person name="Aidinis V."/>
            <person name="Allen J.E."/>
            <person name="Ambesi-Impiombato A."/>
            <person name="Apweiler R."/>
            <person name="Aturaliya R.N."/>
            <person name="Bailey T.L."/>
            <person name="Bansal M."/>
            <person name="Baxter L."/>
            <person name="Beisel K.W."/>
            <person name="Bersano T."/>
            <person name="Bono H."/>
            <person name="Chalk A.M."/>
            <person name="Chiu K.P."/>
            <person name="Choudhary V."/>
            <person name="Christoffels A."/>
            <person name="Clutterbuck D.R."/>
            <person name="Crowe M.L."/>
            <person name="Dalla E."/>
            <person name="Dalrymple B.P."/>
            <person name="de Bono B."/>
            <person name="Della Gatta G."/>
            <person name="di Bernardo D."/>
            <person name="Down T."/>
            <person name="Engstrom P."/>
            <person name="Fagiolini M."/>
            <person name="Faulkner G."/>
            <person name="Fletcher C.F."/>
            <person name="Fukushima T."/>
            <person name="Furuno M."/>
            <person name="Futaki S."/>
            <person name="Gariboldi M."/>
            <person name="Georgii-Hemming P."/>
            <person name="Gingeras T.R."/>
            <person name="Gojobori T."/>
            <person name="Green R.E."/>
            <person name="Gustincich S."/>
            <person name="Harbers M."/>
            <person name="Hayashi Y."/>
            <person name="Hensch T.K."/>
            <person name="Hirokawa N."/>
            <person name="Hill D."/>
            <person name="Huminiecki L."/>
            <person name="Iacono M."/>
            <person name="Ikeo K."/>
            <person name="Iwama A."/>
            <person name="Ishikawa T."/>
            <person name="Jakt M."/>
            <person name="Kanapin A."/>
            <person name="Katoh M."/>
            <person name="Kawasawa Y."/>
            <person name="Kelso J."/>
            <person name="Kitamura H."/>
            <person name="Kitano H."/>
            <person name="Kollias G."/>
            <person name="Krishnan S.P."/>
            <person name="Kruger A."/>
            <person name="Kummerfeld S.K."/>
            <person name="Kurochkin I.V."/>
            <person name="Lareau L.F."/>
            <person name="Lazarevic D."/>
            <person name="Lipovich L."/>
            <person name="Liu J."/>
            <person name="Liuni S."/>
            <person name="McWilliam S."/>
            <person name="Madan Babu M."/>
            <person name="Madera M."/>
            <person name="Marchionni L."/>
            <person name="Matsuda H."/>
            <person name="Matsuzawa S."/>
            <person name="Miki H."/>
            <person name="Mignone F."/>
            <person name="Miyake S."/>
            <person name="Morris K."/>
            <person name="Mottagui-Tabar S."/>
            <person name="Mulder N."/>
            <person name="Nakano N."/>
            <person name="Nakauchi H."/>
            <person name="Ng P."/>
            <person name="Nilsson R."/>
            <person name="Nishiguchi S."/>
            <person name="Nishikawa S."/>
            <person name="Nori F."/>
            <person name="Ohara O."/>
            <person name="Okazaki Y."/>
            <person name="Orlando V."/>
            <person name="Pang K.C."/>
            <person name="Pavan W.J."/>
            <person name="Pavesi G."/>
            <person name="Pesole G."/>
            <person name="Petrovsky N."/>
            <person name="Piazza S."/>
            <person name="Reed J."/>
            <person name="Reid J.F."/>
            <person name="Ring B.Z."/>
            <person name="Ringwald M."/>
            <person name="Rost B."/>
            <person name="Ruan Y."/>
            <person name="Salzberg S.L."/>
            <person name="Sandelin A."/>
            <person name="Schneider C."/>
            <person name="Schoenbach C."/>
            <person name="Sekiguchi K."/>
            <person name="Semple C.A."/>
            <person name="Seno S."/>
            <person name="Sessa L."/>
            <person name="Sheng Y."/>
            <person name="Shibata Y."/>
            <person name="Shimada H."/>
            <person name="Shimada K."/>
            <person name="Silva D."/>
            <person name="Sinclair B."/>
            <person name="Sperling S."/>
            <person name="Stupka E."/>
            <person name="Sugiura K."/>
            <person name="Sultana R."/>
            <person name="Takenaka Y."/>
            <person name="Taki K."/>
            <person name="Tammoja K."/>
            <person name="Tan S.L."/>
            <person name="Tang S."/>
            <person name="Taylor M.S."/>
            <person name="Tegner J."/>
            <person name="Teichmann S.A."/>
            <person name="Ueda H.R."/>
            <person name="van Nimwegen E."/>
            <person name="Verardo R."/>
            <person name="Wei C.L."/>
            <person name="Yagi K."/>
            <person name="Yamanishi H."/>
            <person name="Zabarovsky E."/>
            <person name="Zhu S."/>
            <person name="Zimmer A."/>
            <person name="Hide W."/>
            <person name="Bult C."/>
            <person name="Grimmond S.M."/>
            <person name="Teasdale R.D."/>
            <person name="Liu E.T."/>
            <person name="Brusic V."/>
            <person name="Quackenbush J."/>
            <person name="Wahlestedt C."/>
            <person name="Mattick J.S."/>
            <person name="Hume D.A."/>
            <person name="Kai C."/>
            <person name="Sasaki D."/>
            <person name="Tomaru Y."/>
            <person name="Fukuda S."/>
            <person name="Kanamori-Katayama M."/>
            <person name="Suzuki M."/>
            <person name="Aoki J."/>
            <person name="Arakawa T."/>
            <person name="Iida J."/>
            <person name="Imamura K."/>
            <person name="Itoh M."/>
            <person name="Kato T."/>
            <person name="Kawaji H."/>
            <person name="Kawagashira N."/>
            <person name="Kawashima T."/>
            <person name="Kojima M."/>
            <person name="Kondo S."/>
            <person name="Konno H."/>
            <person name="Nakano K."/>
            <person name="Ninomiya N."/>
            <person name="Nishio T."/>
            <person name="Okada M."/>
            <person name="Plessy C."/>
            <person name="Shibata K."/>
            <person name="Shiraki T."/>
            <person name="Suzuki S."/>
            <person name="Tagami M."/>
            <person name="Waki K."/>
            <person name="Watahiki A."/>
            <person name="Okamura-Oho Y."/>
            <person name="Suzuki H."/>
            <person name="Kawai J."/>
            <person name="Hayashizaki Y."/>
        </authorList>
    </citation>
    <scope>NUCLEOTIDE SEQUENCE [LARGE SCALE MRNA] (ISOFORM 1)</scope>
    <source>
        <strain>C57BL/6J</strain>
        <tissue>Embryonic stem cell</tissue>
    </source>
</reference>
<reference key="6">
    <citation type="journal article" date="2003" name="Cell Res.">
        <title>Identification of two distinct transactivation domains in the pluripotency sustaining factor nanog.</title>
        <authorList>
            <person name="Pan G.J."/>
            <person name="Pei D.Q."/>
        </authorList>
    </citation>
    <scope>FUNCTION</scope>
</reference>
<reference key="7">
    <citation type="journal article" date="2005" name="Gene Expr. Patterns">
        <title>Nanog expression in mouse germ cell development.</title>
        <authorList>
            <person name="Yamaguchi S."/>
            <person name="Kimura H."/>
            <person name="Tada M."/>
            <person name="Nakatsuji N."/>
            <person name="Tada T."/>
        </authorList>
    </citation>
    <scope>DEVELOPMENTAL STAGE</scope>
    <scope>TISSUE SPECIFICITY</scope>
</reference>
<reference key="8">
    <citation type="journal article" date="2005" name="J. Biol. Chem.">
        <title>The stem cell pluripotency factor NANOG activates transcription with two unusually potent subdomains at its C terminus.</title>
        <authorList>
            <person name="Pan G."/>
            <person name="Pei D."/>
        </authorList>
    </citation>
    <scope>FUNCTION</scope>
    <scope>DNA-BINDING</scope>
</reference>
<reference key="9">
    <citation type="journal article" date="2005" name="Mech. Dev.">
        <title>Pluripotential competence of cells associated with Nanog activity.</title>
        <authorList>
            <person name="Hatano S.Y."/>
            <person name="Tada M."/>
            <person name="Kimura H."/>
            <person name="Yamaguchi S."/>
            <person name="Kono T."/>
            <person name="Nakano T."/>
            <person name="Suemori H."/>
            <person name="Nakatsuji N."/>
            <person name="Tada T."/>
        </authorList>
    </citation>
    <scope>SUBCELLULAR LOCATION</scope>
    <scope>DEVELOPMENTAL STAGE</scope>
</reference>
<reference key="10">
    <citation type="journal article" date="2005" name="Nat. Cell Biol.">
        <title>p53 induces differentiation of mouse embryonic stem cells by suppressing Nanog expression.</title>
        <authorList>
            <person name="Lin T."/>
            <person name="Chao C."/>
            <person name="Saito S."/>
            <person name="Mazur S.J."/>
            <person name="Murphy M.E."/>
            <person name="Appella E."/>
            <person name="Xu Y."/>
        </authorList>
    </citation>
    <scope>INDUCTION</scope>
</reference>
<reference key="11">
    <citation type="journal article" date="2006" name="FASEB J.">
        <title>A negative feedback loop of transcription factors that controls stem cell pluripotency and self-renewal.</title>
        <authorList>
            <person name="Pan G."/>
            <person name="Li J."/>
            <person name="Zhou Y."/>
            <person name="Zheng H."/>
            <person name="Pei D."/>
        </authorList>
    </citation>
    <scope>INDUCTION</scope>
</reference>
<reference key="12">
    <citation type="journal article" date="2006" name="J. Biol. Chem.">
        <title>Sall4 interacts with Nanog and co-occupies Nanog genomic sites in embryonic stem cells.</title>
        <authorList>
            <person name="Wu Q."/>
            <person name="Chen X."/>
            <person name="Zhang J."/>
            <person name="Loh Y.-H."/>
            <person name="Low T.-Y."/>
            <person name="Zhang W."/>
            <person name="Zhang W."/>
            <person name="Sze S.-K."/>
            <person name="Lim B."/>
            <person name="Ng H.-H."/>
        </authorList>
    </citation>
    <scope>INTERACTION WITH SALL4</scope>
    <scope>DNA-BINDING</scope>
</reference>
<reference key="13">
    <citation type="journal article" date="2006" name="Nature">
        <title>Nanog promotes transfer of pluripotency after cell fusion.</title>
        <authorList>
            <person name="Silva J."/>
            <person name="Chambers I."/>
            <person name="Pollard S."/>
            <person name="Smith A."/>
        </authorList>
    </citation>
    <scope>FUNCTION</scope>
</reference>
<reference key="14">
    <citation type="journal article" date="2006" name="Nat. Genet.">
        <title>The Oct4 and Nanog transcription network regulates pluripotency in mouse embryonic stem cells.</title>
        <authorList>
            <person name="Loh Y.-H."/>
            <person name="Wu Q."/>
            <person name="Chew J.-L."/>
            <person name="Vega V.B."/>
            <person name="Zhang W."/>
            <person name="Chen X."/>
            <person name="Bourque G."/>
            <person name="George J."/>
            <person name="Leong B."/>
            <person name="Liu J."/>
            <person name="Wong K.-Y."/>
            <person name="Sung K.W."/>
            <person name="Lee C.W."/>
            <person name="Zhao X.-D."/>
            <person name="Chiu K.-P."/>
            <person name="Lipovich L."/>
            <person name="Kuznetsov V.A."/>
            <person name="Robson P."/>
            <person name="Stanton L.W."/>
            <person name="Wei C.-L."/>
            <person name="Ruan Y."/>
            <person name="Lim B."/>
            <person name="Ng H.-H."/>
        </authorList>
    </citation>
    <scope>FUNCTION</scope>
    <scope>INDUCTION</scope>
</reference>
<reference key="15">
    <citation type="journal article" date="2006" name="Proc. Natl. Acad. Sci. U.S.A.">
        <title>Nanog binds to Smad1 and blocks bone morphogenetic protein-induced differentiation of embryonic stem cells.</title>
        <authorList>
            <person name="Suzuki A."/>
            <person name="Raya A."/>
            <person name="Kawakami Y."/>
            <person name="Morita M."/>
            <person name="Matsui T."/>
            <person name="Nakashima K."/>
            <person name="Gage F.H."/>
            <person name="Rodriguez-Esteban C."/>
            <person name="Izpisua Belmonte J.C."/>
        </authorList>
    </citation>
    <scope>FUNCTION</scope>
    <scope>INTERACTION WITH SMAD1</scope>
    <scope>INDUCTION</scope>
</reference>
<reference key="16">
    <citation type="journal article" date="2008" name="J. Biol. Chem.">
        <title>Esrrb activates Oct4 transcription and sustains self-renewal and pluripotency in embryonic stem cells.</title>
        <authorList>
            <person name="Zhang X."/>
            <person name="Zhang J."/>
            <person name="Wang T."/>
            <person name="Esteban M.A."/>
            <person name="Pei D."/>
        </authorList>
    </citation>
    <scope>INTERACTION WITH ESRRB</scope>
</reference>
<reference key="17">
    <citation type="journal article" date="2009" name="Nature">
        <title>A histone H3 lysine 36 trimethyltransferase links Nkx2-5 to Wolf-Hirschhorn syndrome.</title>
        <authorList>
            <person name="Nimura K."/>
            <person name="Ura K."/>
            <person name="Shiratori H."/>
            <person name="Ikawa M."/>
            <person name="Okabe M."/>
            <person name="Schwartz R.J."/>
            <person name="Kaneda Y."/>
        </authorList>
    </citation>
    <scope>INTERACTION WITH NSD2</scope>
</reference>
<reference key="18">
    <citation type="journal article" date="2011" name="Stem Cells">
        <title>Zfp281 functions as a transcriptional repressor for pluripotency of mouse embryonic stem cells.</title>
        <authorList>
            <person name="Fidalgo M."/>
            <person name="Shekar P.C."/>
            <person name="Ang Y.S."/>
            <person name="Fujiwara Y."/>
            <person name="Orkin S.H."/>
            <person name="Wang J."/>
        </authorList>
    </citation>
    <scope>FUNCTION</scope>
    <scope>INTERACTION WITH ZNF281</scope>
</reference>
<reference key="19">
    <citation type="journal article" date="2012" name="Proc. Natl. Acad. Sci. U.S.A.">
        <title>Zfp281 mediates Nanog autorepression through recruitment of the NuRD complex and inhibits somatic cell reprogramming.</title>
        <authorList>
            <person name="Fidalgo M."/>
            <person name="Faiola F."/>
            <person name="Pereira C.F."/>
            <person name="Ding J."/>
            <person name="Saunders A."/>
            <person name="Gingold J."/>
            <person name="Schaniel C."/>
            <person name="Lemischka I.R."/>
            <person name="Silva J.C."/>
            <person name="Wang J."/>
        </authorList>
    </citation>
    <scope>FUNCTION</scope>
    <scope>INTERACTION WITH ZNF281</scope>
    <scope>INDUCTION</scope>
</reference>
<reference key="20">
    <citation type="journal article" date="2015" name="Proc. Natl. Acad. Sci. U.S.A.">
        <title>Structure-based discovery of NANOG variant with enhanced properties to promote self-renewal and reprogramming of pluripotent stem cells.</title>
        <authorList>
            <person name="Hayashi Y."/>
            <person name="Caboni L."/>
            <person name="Das D."/>
            <person name="Yumoto F."/>
            <person name="Clayton T."/>
            <person name="Deller M.C."/>
            <person name="Nguyen P."/>
            <person name="Farr C.L."/>
            <person name="Chiu H.J."/>
            <person name="Miller M.D."/>
            <person name="Elsliger M.A."/>
            <person name="Deacon A.M."/>
            <person name="Godzik A."/>
            <person name="Lesley S.A."/>
            <person name="Tomoda K."/>
            <person name="Conklin B.R."/>
            <person name="Wilson I.A."/>
            <person name="Yamanaka S."/>
            <person name="Fletterick R.J."/>
        </authorList>
    </citation>
    <scope>FUNCTION</scope>
    <scope>MUTAGENESIS OF THR-101; PHE-103; TYR-120; LEU-123; GLN-125; MET-126; TYR-137; LYS-138; LYS-141; THR-142; GLN-145; ASN-146; ARG-148; MET-149 AND LYS-152</scope>
</reference>
<reference key="21">
    <citation type="journal article" date="2008" name="J. Mol. Biol.">
        <title>Crystal structure and DNA binding of the homeodomain of the stem cell transcription factor Nanog.</title>
        <authorList>
            <person name="Jauch R."/>
            <person name="Ng C.K.L."/>
            <person name="Saikatendu K.S."/>
            <person name="Stevens R.C."/>
            <person name="Kolatkar P.R."/>
        </authorList>
    </citation>
    <scope>X-RAY CRYSTALLOGRAPHY (2.6 ANGSTROMS) OF 96-155</scope>
    <scope>INTERACTION WITH DNA</scope>
    <scope>PARTIAL PROTEIN SEQUENCE</scope>
    <scope>MUTAGENESIS OF LYS-112; MET-126; TYR-137; LYS-138; THR-142; ASN-146 AND GLN-147</scope>
</reference>
<organism>
    <name type="scientific">Mus musculus</name>
    <name type="common">Mouse</name>
    <dbReference type="NCBI Taxonomy" id="10090"/>
    <lineage>
        <taxon>Eukaryota</taxon>
        <taxon>Metazoa</taxon>
        <taxon>Chordata</taxon>
        <taxon>Craniata</taxon>
        <taxon>Vertebrata</taxon>
        <taxon>Euteleostomi</taxon>
        <taxon>Mammalia</taxon>
        <taxon>Eutheria</taxon>
        <taxon>Euarchontoglires</taxon>
        <taxon>Glires</taxon>
        <taxon>Rodentia</taxon>
        <taxon>Myomorpha</taxon>
        <taxon>Muroidea</taxon>
        <taxon>Muridae</taxon>
        <taxon>Murinae</taxon>
        <taxon>Mus</taxon>
        <taxon>Mus</taxon>
    </lineage>
</organism>
<evidence type="ECO:0000250" key="1">
    <source>
        <dbReference type="UniProtKB" id="Q9H9S0"/>
    </source>
</evidence>
<evidence type="ECO:0000255" key="2">
    <source>
        <dbReference type="PROSITE-ProRule" id="PRU00108"/>
    </source>
</evidence>
<evidence type="ECO:0000256" key="3">
    <source>
        <dbReference type="SAM" id="MobiDB-lite"/>
    </source>
</evidence>
<evidence type="ECO:0000269" key="4">
    <source>
    </source>
</evidence>
<evidence type="ECO:0000269" key="5">
    <source>
    </source>
</evidence>
<evidence type="ECO:0000269" key="6">
    <source>
    </source>
</evidence>
<evidence type="ECO:0000269" key="7">
    <source>
    </source>
</evidence>
<evidence type="ECO:0000269" key="8">
    <source>
    </source>
</evidence>
<evidence type="ECO:0000269" key="9">
    <source>
    </source>
</evidence>
<evidence type="ECO:0000269" key="10">
    <source>
    </source>
</evidence>
<evidence type="ECO:0000269" key="11">
    <source>
    </source>
</evidence>
<evidence type="ECO:0000269" key="12">
    <source>
    </source>
</evidence>
<evidence type="ECO:0000269" key="13">
    <source>
    </source>
</evidence>
<evidence type="ECO:0000269" key="14">
    <source>
    </source>
</evidence>
<evidence type="ECO:0000269" key="15">
    <source>
    </source>
</evidence>
<evidence type="ECO:0000269" key="16">
    <source>
    </source>
</evidence>
<evidence type="ECO:0000269" key="17">
    <source>
    </source>
</evidence>
<evidence type="ECO:0000269" key="18">
    <source>
    </source>
</evidence>
<evidence type="ECO:0000269" key="19">
    <source>
    </source>
</evidence>
<evidence type="ECO:0000269" key="20">
    <source>
    </source>
</evidence>
<evidence type="ECO:0000269" key="21">
    <source>
    </source>
</evidence>
<evidence type="ECO:0000269" key="22">
    <source>
    </source>
</evidence>
<evidence type="ECO:0000269" key="23">
    <source>
    </source>
</evidence>
<evidence type="ECO:0000303" key="24">
    <source>
    </source>
</evidence>
<evidence type="ECO:0000305" key="25"/>
<evidence type="ECO:0007829" key="26">
    <source>
        <dbReference type="PDB" id="2VI6"/>
    </source>
</evidence>